<name>FCA_ORYSJ</name>
<comment type="function">
    <text evidence="1 5 8">Plays a major role in the promotion of the transition of the vegetative meristem to reproductive development (PubMed:16240176). Required for RNA-mediated chromatin silencing of a range of loci in the genome. Cotranscriptionally recognizes aberrant RNA and marks it for silencing. Controls alternative cleavage and polyadenylation on pre-mRNAs and antisense RNAs (By similarity). Regulates flowering time, seed size and cell volume, probably via the modulation of cell size (PubMed:17597396).</text>
</comment>
<comment type="subunit">
    <text evidence="7 9 10">Interacts with FY (PubMed:16820865, PubMed:18854333, PubMed:19561057). Binds to SF1, FIK, RPRD1B, Os09g0509000/LOC_Os09g33480 and MADS8 (PubMed:19561057).</text>
</comment>
<comment type="subcellular location">
    <subcellularLocation>
        <location evidence="10">Nucleus</location>
    </subcellularLocation>
</comment>
<comment type="alternative products">
    <event type="alternative splicing"/>
    <isoform>
        <id>Q6K271-1</id>
        <name>1</name>
        <name evidence="11 12">gamma</name>
        <name evidence="12">OsFCA-1</name>
        <sequence type="displayed"/>
    </isoform>
    <isoform>
        <id>Q6K271-2</id>
        <name>2</name>
        <name evidence="12">OsFCA-3</name>
        <sequence type="described" ref="VSP_060184"/>
    </isoform>
    <isoform>
        <id>Q6K271-3</id>
        <name>3</name>
        <name evidence="12">OsFCA-2</name>
        <sequence type="described" ref="VSP_060185 VSP_060186"/>
    </isoform>
    <isoform>
        <id>Q6K271-4</id>
        <name>4</name>
        <name evidence="12">OsFCA-4</name>
        <sequence type="described" ref="VSP_060184 VSP_060187"/>
    </isoform>
    <text evidence="5">Additional isoforms alpha and beta seem to exist.</text>
</comment>
<comment type="tissue specificity">
    <text evidence="5 6 10">Mostly expressed in young flowers (panicles) and stems, and also present in young seedlings leaves and roots.</text>
</comment>
<comment type="developmental stage">
    <text evidence="5 6">Mainly observed at earlier stages of panicle development (PubMed:16240176). Up-regulated in young spikelet of primary branch-differentiating stage and down-regulated in young spikelet of pistil and stamen-differentiating stage (PubMed:16753815). Accumulates in differentiating calli (PubMed:16753815).</text>
</comment>
<comment type="miscellaneous">
    <molecule>Isoform 1</molecule>
    <text evidence="6">Major isoform.</text>
</comment>
<protein>
    <recommendedName>
        <fullName evidence="11 14">Flowering time control protein FCA</fullName>
        <shortName evidence="12">OsFCA</shortName>
        <shortName evidence="13">rFCA</shortName>
    </recommendedName>
</protein>
<dbReference type="EMBL" id="AY654584">
    <property type="protein sequence ID" value="AAT72462.1"/>
    <property type="molecule type" value="mRNA"/>
</dbReference>
<dbReference type="EMBL" id="AY730687">
    <property type="protein sequence ID" value="AAW62371.1"/>
    <property type="molecule type" value="mRNA"/>
</dbReference>
<dbReference type="EMBL" id="AY274928">
    <property type="protein sequence ID" value="AAQ17123.1"/>
    <property type="molecule type" value="mRNA"/>
</dbReference>
<dbReference type="EMBL" id="AY311343">
    <property type="protein sequence ID" value="AAQ74971.1"/>
    <property type="molecule type" value="mRNA"/>
</dbReference>
<dbReference type="EMBL" id="AY311344">
    <property type="protein sequence ID" value="AAQ74972.1"/>
    <property type="molecule type" value="mRNA"/>
</dbReference>
<dbReference type="EMBL" id="AY331574">
    <property type="protein sequence ID" value="AAQ74973.1"/>
    <property type="molecule type" value="mRNA"/>
</dbReference>
<dbReference type="EMBL" id="AP008215">
    <property type="protein sequence ID" value="BAF24515.1"/>
    <property type="molecule type" value="Genomic_DNA"/>
</dbReference>
<dbReference type="EMBL" id="AP006062">
    <property type="protein sequence ID" value="BAD20100.1"/>
    <property type="molecule type" value="Genomic_DNA"/>
</dbReference>
<dbReference type="EMBL" id="AP014965">
    <property type="protein sequence ID" value="BAT06887.1"/>
    <property type="molecule type" value="Genomic_DNA"/>
</dbReference>
<dbReference type="EMBL" id="AP014965">
    <property type="protein sequence ID" value="BAT06888.1"/>
    <property type="molecule type" value="Genomic_DNA"/>
</dbReference>
<dbReference type="RefSeq" id="XP_015612120.1">
    <property type="nucleotide sequence ID" value="XM_015756634.1"/>
</dbReference>
<dbReference type="SMR" id="Q6K271"/>
<dbReference type="FunCoup" id="Q6K271">
    <property type="interactions" value="518"/>
</dbReference>
<dbReference type="STRING" id="39947.Q6K271"/>
<dbReference type="PaxDb" id="39947-Q6K271"/>
<dbReference type="EnsemblPlants" id="Os09t0123200-01">
    <molecule id="Q6K271-1"/>
    <property type="protein sequence ID" value="Os09t0123200-01"/>
    <property type="gene ID" value="Os09g0123200"/>
</dbReference>
<dbReference type="Gramene" id="Os09t0123200-01">
    <molecule id="Q6K271-1"/>
    <property type="protein sequence ID" value="Os09t0123200-01"/>
    <property type="gene ID" value="Os09g0123200"/>
</dbReference>
<dbReference type="KEGG" id="dosa:Os09g0123200"/>
<dbReference type="eggNOG" id="KOG0144">
    <property type="taxonomic scope" value="Eukaryota"/>
</dbReference>
<dbReference type="HOGENOM" id="CLU_020343_0_0_1"/>
<dbReference type="InParanoid" id="Q6K271"/>
<dbReference type="OMA" id="FHPYRGP"/>
<dbReference type="OrthoDB" id="410044at2759"/>
<dbReference type="Proteomes" id="UP000000763">
    <property type="component" value="Chromosome 9"/>
</dbReference>
<dbReference type="Proteomes" id="UP000059680">
    <property type="component" value="Chromosome 9"/>
</dbReference>
<dbReference type="ExpressionAtlas" id="Q6K271">
    <property type="expression patterns" value="baseline and differential"/>
</dbReference>
<dbReference type="GO" id="GO:0005634">
    <property type="term" value="C:nucleus"/>
    <property type="evidence" value="ECO:0000314"/>
    <property type="project" value="UniProtKB"/>
</dbReference>
<dbReference type="GO" id="GO:0005681">
    <property type="term" value="C:spliceosomal complex"/>
    <property type="evidence" value="ECO:0000318"/>
    <property type="project" value="GO_Central"/>
</dbReference>
<dbReference type="GO" id="GO:0003723">
    <property type="term" value="F:RNA binding"/>
    <property type="evidence" value="ECO:0000318"/>
    <property type="project" value="GO_Central"/>
</dbReference>
<dbReference type="GO" id="GO:0030154">
    <property type="term" value="P:cell differentiation"/>
    <property type="evidence" value="ECO:0007669"/>
    <property type="project" value="UniProtKB-KW"/>
</dbReference>
<dbReference type="GO" id="GO:0009908">
    <property type="term" value="P:flower development"/>
    <property type="evidence" value="ECO:0007669"/>
    <property type="project" value="UniProtKB-KW"/>
</dbReference>
<dbReference type="GO" id="GO:0048026">
    <property type="term" value="P:positive regulation of mRNA splicing, via spliceosome"/>
    <property type="evidence" value="ECO:0000318"/>
    <property type="project" value="GO_Central"/>
</dbReference>
<dbReference type="GO" id="GO:0008361">
    <property type="term" value="P:regulation of cell size"/>
    <property type="evidence" value="ECO:0000315"/>
    <property type="project" value="UniProtKB"/>
</dbReference>
<dbReference type="GO" id="GO:0009909">
    <property type="term" value="P:regulation of flower development"/>
    <property type="evidence" value="ECO:0000315"/>
    <property type="project" value="UniProtKB"/>
</dbReference>
<dbReference type="GO" id="GO:0080113">
    <property type="term" value="P:regulation of seed growth"/>
    <property type="evidence" value="ECO:0000315"/>
    <property type="project" value="UniProtKB"/>
</dbReference>
<dbReference type="GO" id="GO:0048510">
    <property type="term" value="P:regulation of timing of transition from vegetative to reproductive phase"/>
    <property type="evidence" value="ECO:0000315"/>
    <property type="project" value="UniProtKB"/>
</dbReference>
<dbReference type="CDD" id="cd00201">
    <property type="entry name" value="WW"/>
    <property type="match status" value="1"/>
</dbReference>
<dbReference type="FunFam" id="2.20.70.10:FF:000079">
    <property type="entry name" value="FCA gamma protein"/>
    <property type="match status" value="1"/>
</dbReference>
<dbReference type="FunFam" id="3.30.70.330:FF:000374">
    <property type="entry name" value="Flowering time control protein FCA"/>
    <property type="match status" value="1"/>
</dbReference>
<dbReference type="FunFam" id="3.30.70.330:FF:000332">
    <property type="entry name" value="flowering time control protein FCA isoform X2"/>
    <property type="match status" value="1"/>
</dbReference>
<dbReference type="Gene3D" id="2.20.70.10">
    <property type="match status" value="1"/>
</dbReference>
<dbReference type="Gene3D" id="3.30.70.330">
    <property type="match status" value="2"/>
</dbReference>
<dbReference type="InterPro" id="IPR002343">
    <property type="entry name" value="Hud_Sxl_RNA"/>
</dbReference>
<dbReference type="InterPro" id="IPR012677">
    <property type="entry name" value="Nucleotide-bd_a/b_plait_sf"/>
</dbReference>
<dbReference type="InterPro" id="IPR035979">
    <property type="entry name" value="RBD_domain_sf"/>
</dbReference>
<dbReference type="InterPro" id="IPR000504">
    <property type="entry name" value="RRM_dom"/>
</dbReference>
<dbReference type="InterPro" id="IPR001202">
    <property type="entry name" value="WW_dom"/>
</dbReference>
<dbReference type="InterPro" id="IPR036020">
    <property type="entry name" value="WW_dom_sf"/>
</dbReference>
<dbReference type="PANTHER" id="PTHR24012">
    <property type="entry name" value="RNA BINDING PROTEIN"/>
    <property type="match status" value="1"/>
</dbReference>
<dbReference type="Pfam" id="PF00076">
    <property type="entry name" value="RRM_1"/>
    <property type="match status" value="2"/>
</dbReference>
<dbReference type="Pfam" id="PF00397">
    <property type="entry name" value="WW"/>
    <property type="match status" value="1"/>
</dbReference>
<dbReference type="PRINTS" id="PR00961">
    <property type="entry name" value="HUDSXLRNA"/>
</dbReference>
<dbReference type="SMART" id="SM00360">
    <property type="entry name" value="RRM"/>
    <property type="match status" value="2"/>
</dbReference>
<dbReference type="SMART" id="SM00456">
    <property type="entry name" value="WW"/>
    <property type="match status" value="1"/>
</dbReference>
<dbReference type="SUPFAM" id="SSF54928">
    <property type="entry name" value="RNA-binding domain, RBD"/>
    <property type="match status" value="2"/>
</dbReference>
<dbReference type="SUPFAM" id="SSF51045">
    <property type="entry name" value="WW domain"/>
    <property type="match status" value="1"/>
</dbReference>
<dbReference type="PROSITE" id="PS50102">
    <property type="entry name" value="RRM"/>
    <property type="match status" value="2"/>
</dbReference>
<dbReference type="PROSITE" id="PS50020">
    <property type="entry name" value="WW_DOMAIN_2"/>
    <property type="match status" value="1"/>
</dbReference>
<gene>
    <name evidence="11 12 14" type="primary">FCA</name>
    <name evidence="15" type="ordered locus">LOC_Os09g03610</name>
    <name evidence="17" type="ordered locus">Os09g0123200</name>
    <name evidence="17" type="ORF">OSNPB_090123200</name>
    <name evidence="16" type="ORF">P0415D04.46-1</name>
</gene>
<organism>
    <name type="scientific">Oryza sativa subsp. japonica</name>
    <name type="common">Rice</name>
    <dbReference type="NCBI Taxonomy" id="39947"/>
    <lineage>
        <taxon>Eukaryota</taxon>
        <taxon>Viridiplantae</taxon>
        <taxon>Streptophyta</taxon>
        <taxon>Embryophyta</taxon>
        <taxon>Tracheophyta</taxon>
        <taxon>Spermatophyta</taxon>
        <taxon>Magnoliopsida</taxon>
        <taxon>Liliopsida</taxon>
        <taxon>Poales</taxon>
        <taxon>Poaceae</taxon>
        <taxon>BOP clade</taxon>
        <taxon>Oryzoideae</taxon>
        <taxon>Oryzeae</taxon>
        <taxon>Oryzinae</taxon>
        <taxon>Oryza</taxon>
        <taxon>Oryza sativa</taxon>
    </lineage>
</organism>
<feature type="chain" id="PRO_0000447371" description="Flowering time control protein FCA">
    <location>
        <begin position="1"/>
        <end position="738"/>
    </location>
</feature>
<feature type="domain" description="RRM 1" evidence="2">
    <location>
        <begin position="122"/>
        <end position="203"/>
    </location>
</feature>
<feature type="domain" description="RRM 2" evidence="2">
    <location>
        <begin position="213"/>
        <end position="293"/>
    </location>
</feature>
<feature type="domain" description="WW" evidence="3">
    <location>
        <begin position="609"/>
        <end position="642"/>
    </location>
</feature>
<feature type="region of interest" description="Disordered" evidence="4">
    <location>
        <begin position="1"/>
        <end position="118"/>
    </location>
</feature>
<feature type="region of interest" description="Disordered" evidence="4">
    <location>
        <begin position="292"/>
        <end position="414"/>
    </location>
</feature>
<feature type="region of interest" description="Disordered" evidence="4">
    <location>
        <begin position="566"/>
        <end position="594"/>
    </location>
</feature>
<feature type="region of interest" description="Disordered" evidence="4">
    <location>
        <begin position="670"/>
        <end position="738"/>
    </location>
</feature>
<feature type="compositionally biased region" description="Gly residues" evidence="4">
    <location>
        <begin position="52"/>
        <end position="70"/>
    </location>
</feature>
<feature type="compositionally biased region" description="Gly residues" evidence="4">
    <location>
        <begin position="81"/>
        <end position="98"/>
    </location>
</feature>
<feature type="compositionally biased region" description="Basic and acidic residues" evidence="4">
    <location>
        <begin position="109"/>
        <end position="118"/>
    </location>
</feature>
<feature type="compositionally biased region" description="Gly residues" evidence="4">
    <location>
        <begin position="301"/>
        <end position="311"/>
    </location>
</feature>
<feature type="compositionally biased region" description="Polar residues" evidence="4">
    <location>
        <begin position="342"/>
        <end position="358"/>
    </location>
</feature>
<feature type="compositionally biased region" description="Low complexity" evidence="4">
    <location>
        <begin position="368"/>
        <end position="377"/>
    </location>
</feature>
<feature type="compositionally biased region" description="Polar residues" evidence="4">
    <location>
        <begin position="383"/>
        <end position="401"/>
    </location>
</feature>
<feature type="compositionally biased region" description="Polar residues" evidence="4">
    <location>
        <begin position="575"/>
        <end position="594"/>
    </location>
</feature>
<feature type="compositionally biased region" description="Low complexity" evidence="4">
    <location>
        <begin position="683"/>
        <end position="706"/>
    </location>
</feature>
<feature type="compositionally biased region" description="Polar residues" evidence="4">
    <location>
        <begin position="723"/>
        <end position="732"/>
    </location>
</feature>
<feature type="splice variant" id="VSP_060184" description="In isoform 2 and isoform 4." evidence="12">
    <original>MHRGGDRSTDPSSGPAPGSRGGGDGRFGRGPSRWSSGGGGGGSGSPPHRFSRGGGGGGGDGGGGGGGGGRFHPYRGPSDHSGGGGYRSGGGGEYGEPGSGPR</original>
    <variation>M</variation>
    <location>
        <begin position="1"/>
        <end position="102"/>
    </location>
</feature>
<feature type="splice variant" id="VSP_060185" description="In isoform 3." evidence="12">
    <original>GQPVQSSNPGAPNAIIPSNINTIPQQATSPAVPLTCNWTEHTSPEGFKYYYNSITRESKWDKPEEYVLYEQQ</original>
    <variation>VAEQHVFSMHTPMCTRFVFSCIMWFTADIFFNRFCFHYRVSQCNLVTLVPQMPLFHQTLIQFPSRLLHLQFL</variation>
    <location>
        <begin position="578"/>
        <end position="649"/>
    </location>
</feature>
<feature type="splice variant" id="VSP_060186" description="In isoform 3." evidence="12">
    <location>
        <begin position="650"/>
        <end position="738"/>
    </location>
</feature>
<feature type="splice variant" id="VSP_060187" description="In isoform 4." evidence="12">
    <location>
        <begin position="728"/>
        <end position="738"/>
    </location>
</feature>
<feature type="sequence conflict" description="In Ref. 3; AAQ74973." evidence="15" ref="3">
    <original>L</original>
    <variation>Q</variation>
    <location>
        <position position="441"/>
    </location>
</feature>
<feature type="sequence conflict" description="In Ref. 3; AAQ74973." evidence="15" ref="3">
    <original>G</original>
    <variation>N</variation>
    <location>
        <position position="727"/>
    </location>
</feature>
<evidence type="ECO:0000250" key="1">
    <source>
        <dbReference type="UniProtKB" id="O04425"/>
    </source>
</evidence>
<evidence type="ECO:0000255" key="2">
    <source>
        <dbReference type="PROSITE-ProRule" id="PRU00176"/>
    </source>
</evidence>
<evidence type="ECO:0000255" key="3">
    <source>
        <dbReference type="PROSITE-ProRule" id="PRU00224"/>
    </source>
</evidence>
<evidence type="ECO:0000256" key="4">
    <source>
        <dbReference type="SAM" id="MobiDB-lite"/>
    </source>
</evidence>
<evidence type="ECO:0000269" key="5">
    <source>
    </source>
</evidence>
<evidence type="ECO:0000269" key="6">
    <source>
    </source>
</evidence>
<evidence type="ECO:0000269" key="7">
    <source>
    </source>
</evidence>
<evidence type="ECO:0000269" key="8">
    <source>
    </source>
</evidence>
<evidence type="ECO:0000269" key="9">
    <source>
    </source>
</evidence>
<evidence type="ECO:0000269" key="10">
    <source>
    </source>
</evidence>
<evidence type="ECO:0000303" key="11">
    <source>
    </source>
</evidence>
<evidence type="ECO:0000303" key="12">
    <source>
    </source>
</evidence>
<evidence type="ECO:0000303" key="13">
    <source>
    </source>
</evidence>
<evidence type="ECO:0000303" key="14">
    <source ref="1"/>
</evidence>
<evidence type="ECO:0000305" key="15"/>
<evidence type="ECO:0000312" key="16">
    <source>
        <dbReference type="EMBL" id="BAD20100.1"/>
    </source>
</evidence>
<evidence type="ECO:0000312" key="17">
    <source>
        <dbReference type="EMBL" id="BAT06887.1"/>
    </source>
</evidence>
<reference key="1">
    <citation type="submission" date="2004-06" db="EMBL/GenBank/DDBJ databases">
        <title>Components of the Arabidopsis autonomous floral promotion pathway, FCA and FY, are conserved in grasses.</title>
        <authorList>
            <person name="Winichayakul S."/>
            <person name="Beswick N."/>
            <person name="Macknight R."/>
        </authorList>
    </citation>
    <scope>NUCLEOTIDE SEQUENCE [MRNA] (ISOFORM 1)</scope>
</reference>
<reference key="2">
    <citation type="journal article" date="2005" name="Plant Mol. Biol.">
        <title>Conservation and divergence of FCA function between Arabidopsis and rice.</title>
        <authorList>
            <person name="Lee J.-H."/>
            <person name="Cho Y.-S."/>
            <person name="Yoon H.-S."/>
            <person name="Suh M.C."/>
            <person name="Moon J."/>
            <person name="Lee I."/>
            <person name="Weigel D."/>
            <person name="Yun C.-H."/>
            <person name="Kim J.-K."/>
        </authorList>
    </citation>
    <scope>NUCLEOTIDE SEQUENCE [MRNA] (ISOFORM 1)</scope>
    <scope>FUNCTION</scope>
    <scope>ALTERNATIVE SPLICING</scope>
    <scope>TISSUE SPECIFICITY</scope>
    <scope>DEVELOPMENTAL STAGE</scope>
    <source>
        <strain>cv. Ilpoom</strain>
        <tissue>Seedling</tissue>
    </source>
</reference>
<reference key="3">
    <citation type="journal article" date="2006" name="DNA Seq.">
        <title>Alternative splicing and expression analysis of OsFCA (FCA in Oryza sativa L.), a gene homologous to FCA in Arabidopsis.</title>
        <authorList>
            <person name="Du X."/>
            <person name="Qian X."/>
            <person name="Wang D."/>
            <person name="Yang J."/>
        </authorList>
    </citation>
    <scope>NUCLEOTIDE SEQUENCE [MRNA] (ISOFORMS 1; 2; 3 AND 4)</scope>
    <scope>ALTERNATIVE SPLICING</scope>
    <scope>TISSUE SPECIFICITY</scope>
    <scope>DEVELOPMENTAL STAGE</scope>
    <source>
        <strain>cv. Wuyunjing 7</strain>
        <tissue>Callus</tissue>
        <tissue>Leaf</tissue>
    </source>
</reference>
<reference key="4">
    <citation type="journal article" date="2005" name="Nature">
        <title>The map-based sequence of the rice genome.</title>
        <authorList>
            <consortium name="International rice genome sequencing project (IRGSP)"/>
        </authorList>
    </citation>
    <scope>NUCLEOTIDE SEQUENCE [LARGE SCALE GENOMIC DNA]</scope>
    <source>
        <strain>cv. Nipponbare</strain>
    </source>
</reference>
<reference key="5">
    <citation type="journal article" date="2013" name="Rice">
        <title>Improvement of the Oryza sativa Nipponbare reference genome using next generation sequence and optical map data.</title>
        <authorList>
            <person name="Kawahara Y."/>
            <person name="de la Bastide M."/>
            <person name="Hamilton J.P."/>
            <person name="Kanamori H."/>
            <person name="McCombie W.R."/>
            <person name="Ouyang S."/>
            <person name="Schwartz D.C."/>
            <person name="Tanaka T."/>
            <person name="Wu J."/>
            <person name="Zhou S."/>
            <person name="Childs K.L."/>
            <person name="Davidson R.M."/>
            <person name="Lin H."/>
            <person name="Quesada-Ocampo L."/>
            <person name="Vaillancourt B."/>
            <person name="Sakai H."/>
            <person name="Lee S.S."/>
            <person name="Kim J."/>
            <person name="Numa H."/>
            <person name="Itoh T."/>
            <person name="Buell C.R."/>
            <person name="Matsumoto T."/>
        </authorList>
    </citation>
    <scope>GENOME REANNOTATION</scope>
    <source>
        <strain>cv. Nipponbare</strain>
    </source>
</reference>
<reference key="6">
    <citation type="journal article" date="2006" name="Acta Biochim. Biophys. Sin.">
        <title>OsFY, a homolog of AtFY, encodes a protein that can interact with OsFCA-gamma in rice (Oryza sativa L.).</title>
        <authorList>
            <person name="Lu Q."/>
            <person name="Xu Z.-K."/>
            <person name="Song R.-T."/>
        </authorList>
    </citation>
    <scope>INTERACTION WITH FY</scope>
</reference>
<reference key="7">
    <citation type="journal article" date="2007" name="Biosci. Rep.">
        <title>Overexpression of the rFCA RNA recognition motif affects morphologies modifications in rice (Oryza sativa L.).</title>
        <authorList>
            <person name="Hong F."/>
            <person name="Attia K."/>
            <person name="Wei C."/>
            <person name="Li K."/>
            <person name="He G."/>
            <person name="Su W."/>
            <person name="Zhang Q."/>
            <person name="Qian X."/>
            <person name="Yang J."/>
        </authorList>
    </citation>
    <scope>FUNCTION</scope>
    <source>
        <strain>cv. Zhonghua 11</strain>
    </source>
</reference>
<reference key="8">
    <citation type="journal article" date="2008" name="Plant Cell Physiol.">
        <title>Abscisic acid does not disrupt either the Arabidopsis FCA-FY interaction or its rice counterpart in vitro.</title>
        <authorList>
            <person name="Jang Y.H."/>
            <person name="Lee J.H."/>
            <person name="Kim J.K."/>
        </authorList>
    </citation>
    <scope>INTERACTION WITH FY</scope>
</reference>
<reference key="9">
    <citation type="journal article" date="2009" name="Plant Cell Physiol.">
        <title>Survey of rice proteins interacting with OsFCA and OsFY proteins which are homologous to the Arabidopsis flowering time proteins, FCA and FY.</title>
        <authorList>
            <person name="Jang Y.H."/>
            <person name="Park H.-Y."/>
            <person name="Kim S.-K."/>
            <person name="Lee J.H."/>
            <person name="Suh M.C."/>
            <person name="Chung Y.S."/>
            <person name="Paek K.-H."/>
            <person name="Kim J.-K."/>
        </authorList>
    </citation>
    <scope>INTERACTION WITH FY; SF1; FIK; RPRD1B; OS09G0509000/LOC_OS09G33480 AND MADS8</scope>
    <scope>TISSUE SPECIFICITY</scope>
    <scope>SUBCELLULAR LOCATION</scope>
</reference>
<keyword id="KW-0025">Alternative splicing</keyword>
<keyword id="KW-0217">Developmental protein</keyword>
<keyword id="KW-0221">Differentiation</keyword>
<keyword id="KW-0287">Flowering</keyword>
<keyword id="KW-0539">Nucleus</keyword>
<keyword id="KW-1185">Reference proteome</keyword>
<keyword id="KW-0677">Repeat</keyword>
<keyword id="KW-0694">RNA-binding</keyword>
<proteinExistence type="evidence at protein level"/>
<sequence>MHRGGDRSTDPSSGPAPGSRGGGDGRFGRGPSRWSSGGGGGGSGSPPHRFSRGGGGGGGDGGGGGGGGGRFHPYRGPSDHSGGGGYRSGGGGEYGEPGSGPRHRYGSGRGDHSDHDNRNNYVKLFIGSVPRTATEDDVRPLFEEHGDVVEVALIKDRKTGEQQGCCFVKYATSEEAERAIRALHNQYTLPGAMGPIQVRYADGERERHGAIEHKLFVASLNKQATAKEIEEIFAPYGHVEDVYIMKDGMRQSRGCGFVKFSSREPALAAMSALSGNYVMRGCEQPLIIRFADPKRPRPGESRGGPAFGGPGFSPRSDAALVIRPTANLDEPRGRHMPPDSWHPSSPRSAPHQFNNFGSDNPMAPKGSTVTSTTDTATFRPQMFSGNGSLSSQTAVPSSSHMGMNPPPMAQGHHLGGQQIPPLQKLPGLPQNFPVQLQNNQLGQPLQGPAQQIGQLQVPQSMGPGSFGQNRLSGQLPVSQPLMQQNASVSAVQVPSAVSNSMQAIPGQQHLPSNVAPQMLQQPVQQMPSQAPQLLLQQQAALQSSYQSSQQAIYQLQQQLQLMQQQQQSNLNHQQPTQGQPVQSSNPGAPNAIIPSNINTIPQQATSPAVPLTCNWTEHTSPEGFKYYYNSITRESKWDKPEEYVLYEQQQQQQQQQKLLLLQQHQQKLAMQQLQSPPQAQTHPAMQPVQQIPQAQQGQQQMQMKQQELNYTQLQTPGAIDPSRIQQGIQSAQERAWKS</sequence>
<accession>Q6K271</accession>
<accession>A0A0P0XKM4</accession>
<accession>Q0J3F0</accession>
<accession>Q6VQR2</accession>
<accession>Q6W5F4</accession>
<accession>Q6W5F5</accession>
<accession>Q6WQT6</accession>